<dbReference type="EC" id="3.1.3.1"/>
<dbReference type="EMBL" id="X04586">
    <property type="protein sequence ID" value="CAA28257.1"/>
    <property type="molecule type" value="Genomic_DNA"/>
</dbReference>
<dbReference type="EMBL" id="M13345">
    <property type="protein sequence ID" value="AAA83893.1"/>
    <property type="molecule type" value="Genomic_DNA"/>
</dbReference>
<dbReference type="EMBL" id="M29664">
    <property type="protein sequence ID" value="AAA24364.1"/>
    <property type="molecule type" value="Genomic_DNA"/>
</dbReference>
<dbReference type="EMBL" id="M29665">
    <property type="protein sequence ID" value="AAA24365.1"/>
    <property type="molecule type" value="Genomic_DNA"/>
</dbReference>
<dbReference type="EMBL" id="U73857">
    <property type="protein sequence ID" value="AAB18107.1"/>
    <property type="molecule type" value="Genomic_DNA"/>
</dbReference>
<dbReference type="EMBL" id="U00096">
    <property type="protein sequence ID" value="AAC73486.2"/>
    <property type="molecule type" value="Genomic_DNA"/>
</dbReference>
<dbReference type="EMBL" id="AP009048">
    <property type="protein sequence ID" value="BAE76164.1"/>
    <property type="molecule type" value="Genomic_DNA"/>
</dbReference>
<dbReference type="EMBL" id="M33536">
    <property type="protein sequence ID" value="AAA24372.1"/>
    <property type="molecule type" value="Genomic_DNA"/>
</dbReference>
<dbReference type="EMBL" id="AH000890">
    <property type="protein sequence ID" value="AAA24359.2"/>
    <property type="molecule type" value="Genomic_DNA"/>
</dbReference>
<dbReference type="EMBL" id="AH000890">
    <property type="protein sequence ID" value="AAA24360.1"/>
    <property type="molecule type" value="Genomic_DNA"/>
</dbReference>
<dbReference type="EMBL" id="AH000890">
    <property type="protein sequence ID" value="AAA24361.1"/>
    <property type="molecule type" value="Genomic_DNA"/>
</dbReference>
<dbReference type="EMBL" id="J05005">
    <property type="protein sequence ID" value="AAA24362.1"/>
    <property type="molecule type" value="Genomic_DNA"/>
</dbReference>
<dbReference type="EMBL" id="M14399">
    <property type="protein sequence ID" value="AAA23431.1"/>
    <property type="molecule type" value="mRNA"/>
</dbReference>
<dbReference type="EMBL" id="M13763">
    <property type="protein sequence ID" value="AAA24358.1"/>
    <property type="molecule type" value="Genomic_DNA"/>
</dbReference>
<dbReference type="PIR" id="A00776">
    <property type="entry name" value="PAECA"/>
</dbReference>
<dbReference type="RefSeq" id="NP_414917.2">
    <property type="nucleotide sequence ID" value="NC_000913.3"/>
</dbReference>
<dbReference type="RefSeq" id="WP_000814403.1">
    <property type="nucleotide sequence ID" value="NZ_SSZK01000009.1"/>
</dbReference>
<dbReference type="PDB" id="1AJA">
    <property type="method" value="X-ray"/>
    <property type="resolution" value="2.50 A"/>
    <property type="chains" value="A/B=23-471"/>
</dbReference>
<dbReference type="PDB" id="1AJB">
    <property type="method" value="X-ray"/>
    <property type="resolution" value="2.50 A"/>
    <property type="chains" value="A/B=23-471"/>
</dbReference>
<dbReference type="PDB" id="1AJC">
    <property type="method" value="X-ray"/>
    <property type="resolution" value="2.50 A"/>
    <property type="chains" value="A/B=23-471"/>
</dbReference>
<dbReference type="PDB" id="1AJD">
    <property type="method" value="X-ray"/>
    <property type="resolution" value="2.50 A"/>
    <property type="chains" value="A/B=23-471"/>
</dbReference>
<dbReference type="PDB" id="1ALH">
    <property type="method" value="X-ray"/>
    <property type="resolution" value="2.50 A"/>
    <property type="chains" value="A/B=26-471"/>
</dbReference>
<dbReference type="PDB" id="1ALI">
    <property type="method" value="X-ray"/>
    <property type="resolution" value="2.20 A"/>
    <property type="chains" value="A/B=23-471"/>
</dbReference>
<dbReference type="PDB" id="1ALJ">
    <property type="method" value="X-ray"/>
    <property type="resolution" value="2.60 A"/>
    <property type="chains" value="A/B=23-471"/>
</dbReference>
<dbReference type="PDB" id="1ALK">
    <property type="method" value="X-ray"/>
    <property type="resolution" value="2.00 A"/>
    <property type="chains" value="A/B=23-471"/>
</dbReference>
<dbReference type="PDB" id="1ANI">
    <property type="method" value="X-ray"/>
    <property type="resolution" value="2.50 A"/>
    <property type="chains" value="A/B=26-471"/>
</dbReference>
<dbReference type="PDB" id="1ANJ">
    <property type="method" value="X-ray"/>
    <property type="resolution" value="2.30 A"/>
    <property type="chains" value="A/B=26-471"/>
</dbReference>
<dbReference type="PDB" id="1B8J">
    <property type="method" value="X-ray"/>
    <property type="resolution" value="1.90 A"/>
    <property type="chains" value="A/B=23-471"/>
</dbReference>
<dbReference type="PDB" id="1ED8">
    <property type="method" value="X-ray"/>
    <property type="resolution" value="1.75 A"/>
    <property type="chains" value="A/B=23-471"/>
</dbReference>
<dbReference type="PDB" id="1ED9">
    <property type="method" value="X-ray"/>
    <property type="resolution" value="1.75 A"/>
    <property type="chains" value="A/B=23-471"/>
</dbReference>
<dbReference type="PDB" id="1ELX">
    <property type="method" value="X-ray"/>
    <property type="resolution" value="2.60 A"/>
    <property type="chains" value="A/B=23-471"/>
</dbReference>
<dbReference type="PDB" id="1ELY">
    <property type="method" value="X-ray"/>
    <property type="resolution" value="2.80 A"/>
    <property type="chains" value="A/B=23-471"/>
</dbReference>
<dbReference type="PDB" id="1ELZ">
    <property type="method" value="X-ray"/>
    <property type="resolution" value="2.80 A"/>
    <property type="chains" value="A/B=23-471"/>
</dbReference>
<dbReference type="PDB" id="1EW8">
    <property type="method" value="X-ray"/>
    <property type="resolution" value="2.20 A"/>
    <property type="chains" value="A/B=23-471"/>
</dbReference>
<dbReference type="PDB" id="1EW9">
    <property type="method" value="X-ray"/>
    <property type="resolution" value="2.00 A"/>
    <property type="chains" value="A/B=23-471"/>
</dbReference>
<dbReference type="PDB" id="1HJK">
    <property type="method" value="X-ray"/>
    <property type="resolution" value="2.30 A"/>
    <property type="chains" value="A/B=23-471"/>
</dbReference>
<dbReference type="PDB" id="1HQA">
    <property type="method" value="X-ray"/>
    <property type="resolution" value="2.25 A"/>
    <property type="chains" value="A/B=23-471"/>
</dbReference>
<dbReference type="PDB" id="1KH4">
    <property type="method" value="X-ray"/>
    <property type="resolution" value="2.40 A"/>
    <property type="chains" value="A/B=23-471"/>
</dbReference>
<dbReference type="PDB" id="1KH5">
    <property type="method" value="X-ray"/>
    <property type="resolution" value="2.00 A"/>
    <property type="chains" value="A/B=23-471"/>
</dbReference>
<dbReference type="PDB" id="1KH7">
    <property type="method" value="X-ray"/>
    <property type="resolution" value="2.40 A"/>
    <property type="chains" value="A/B=23-471"/>
</dbReference>
<dbReference type="PDB" id="1KH9">
    <property type="method" value="X-ray"/>
    <property type="resolution" value="2.50 A"/>
    <property type="chains" value="A/B=23-471"/>
</dbReference>
<dbReference type="PDB" id="1KHJ">
    <property type="method" value="X-ray"/>
    <property type="resolution" value="2.30 A"/>
    <property type="chains" value="A/B=23-471"/>
</dbReference>
<dbReference type="PDB" id="1KHK">
    <property type="method" value="X-ray"/>
    <property type="resolution" value="2.50 A"/>
    <property type="chains" value="A/B=23-471"/>
</dbReference>
<dbReference type="PDB" id="1KHL">
    <property type="method" value="X-ray"/>
    <property type="resolution" value="2.50 A"/>
    <property type="chains" value="A/B=23-471"/>
</dbReference>
<dbReference type="PDB" id="1KHN">
    <property type="method" value="X-ray"/>
    <property type="resolution" value="2.60 A"/>
    <property type="chains" value="A/B=23-471"/>
</dbReference>
<dbReference type="PDB" id="1URA">
    <property type="method" value="X-ray"/>
    <property type="resolution" value="2.04 A"/>
    <property type="chains" value="A/B=26-471"/>
</dbReference>
<dbReference type="PDB" id="1URB">
    <property type="method" value="X-ray"/>
    <property type="resolution" value="2.14 A"/>
    <property type="chains" value="A/B=26-471"/>
</dbReference>
<dbReference type="PDB" id="1Y6V">
    <property type="method" value="X-ray"/>
    <property type="resolution" value="1.60 A"/>
    <property type="chains" value="A/B=23-471"/>
</dbReference>
<dbReference type="PDB" id="1Y7A">
    <property type="method" value="X-ray"/>
    <property type="resolution" value="1.77 A"/>
    <property type="chains" value="A/B=23-471"/>
</dbReference>
<dbReference type="PDB" id="2ANH">
    <property type="method" value="X-ray"/>
    <property type="resolution" value="2.40 A"/>
    <property type="chains" value="A/B=26-471"/>
</dbReference>
<dbReference type="PDB" id="2G9Y">
    <property type="method" value="X-ray"/>
    <property type="resolution" value="2.00 A"/>
    <property type="chains" value="A/B=23-471"/>
</dbReference>
<dbReference type="PDB" id="2GA3">
    <property type="method" value="X-ray"/>
    <property type="resolution" value="2.20 A"/>
    <property type="chains" value="A/B=23-471"/>
</dbReference>
<dbReference type="PDB" id="2MLX">
    <property type="method" value="NMR"/>
    <property type="chains" value="B=220-310"/>
</dbReference>
<dbReference type="PDB" id="2MLY">
    <property type="method" value="NMR"/>
    <property type="chains" value="B=1-150"/>
</dbReference>
<dbReference type="PDB" id="2MLZ">
    <property type="method" value="NMR"/>
    <property type="chains" value="B=360-471"/>
</dbReference>
<dbReference type="PDB" id="3BDF">
    <property type="method" value="X-ray"/>
    <property type="resolution" value="1.40 A"/>
    <property type="chains" value="A/B=22-471"/>
</dbReference>
<dbReference type="PDB" id="3BDG">
    <property type="method" value="X-ray"/>
    <property type="resolution" value="1.40 A"/>
    <property type="chains" value="A/B=22-471"/>
</dbReference>
<dbReference type="PDB" id="3BDH">
    <property type="method" value="X-ray"/>
    <property type="resolution" value="1.85 A"/>
    <property type="chains" value="A/B=22-471"/>
</dbReference>
<dbReference type="PDB" id="3CMR">
    <property type="method" value="X-ray"/>
    <property type="resolution" value="2.05 A"/>
    <property type="chains" value="A/B=23-471"/>
</dbReference>
<dbReference type="PDB" id="3DPC">
    <property type="method" value="X-ray"/>
    <property type="resolution" value="2.30 A"/>
    <property type="chains" value="A/B=23-471"/>
</dbReference>
<dbReference type="PDB" id="3DYC">
    <property type="method" value="X-ray"/>
    <property type="resolution" value="2.30 A"/>
    <property type="chains" value="A/B=23-471"/>
</dbReference>
<dbReference type="PDB" id="3TG0">
    <property type="method" value="X-ray"/>
    <property type="resolution" value="1.20 A"/>
    <property type="chains" value="A/B/C/D=23-471"/>
</dbReference>
<dbReference type="PDB" id="4KM4">
    <property type="method" value="X-ray"/>
    <property type="resolution" value="2.80 A"/>
    <property type="chains" value="A/B=26-470"/>
</dbReference>
<dbReference type="PDB" id="4YR1">
    <property type="method" value="X-ray"/>
    <property type="resolution" value="2.24 A"/>
    <property type="chains" value="A/B=31-471"/>
</dbReference>
<dbReference type="PDB" id="5C66">
    <property type="method" value="X-ray"/>
    <property type="resolution" value="2.03 A"/>
    <property type="chains" value="A/B=23-471"/>
</dbReference>
<dbReference type="PDB" id="5GAD">
    <property type="method" value="EM"/>
    <property type="resolution" value="3.70 A"/>
    <property type="chains" value="k=1-18"/>
</dbReference>
<dbReference type="PDB" id="5GAF">
    <property type="method" value="EM"/>
    <property type="resolution" value="4.30 A"/>
    <property type="chains" value="k=1-18"/>
</dbReference>
<dbReference type="PDB" id="5GAG">
    <property type="method" value="EM"/>
    <property type="resolution" value="3.80 A"/>
    <property type="chains" value="k=1-18"/>
</dbReference>
<dbReference type="PDB" id="5GAH">
    <property type="method" value="EM"/>
    <property type="resolution" value="3.80 A"/>
    <property type="chains" value="k=1-18"/>
</dbReference>
<dbReference type="PDB" id="5JTL">
    <property type="method" value="NMR"/>
    <property type="chains" value="E=1-471"/>
</dbReference>
<dbReference type="PDB" id="5JTM">
    <property type="method" value="NMR"/>
    <property type="chains" value="E/F/G/H=1-25"/>
</dbReference>
<dbReference type="PDB" id="5JTN">
    <property type="method" value="NMR"/>
    <property type="chains" value="E/F=91-145"/>
</dbReference>
<dbReference type="PDB" id="5JTO">
    <property type="method" value="NMR"/>
    <property type="chains" value="E/F/G/H=271-310"/>
</dbReference>
<dbReference type="PDB" id="5JTP">
    <property type="method" value="NMR"/>
    <property type="chains" value="E/F/G/H=450-471"/>
</dbReference>
<dbReference type="PDB" id="5TPQ">
    <property type="method" value="X-ray"/>
    <property type="resolution" value="2.45 A"/>
    <property type="chains" value="A/B=30-471"/>
</dbReference>
<dbReference type="PDB" id="6PPT">
    <property type="method" value="NMR"/>
    <property type="chains" value="A=3-13"/>
</dbReference>
<dbReference type="PDB" id="6PQ2">
    <property type="method" value="NMR"/>
    <property type="chains" value="A=10-20"/>
</dbReference>
<dbReference type="PDB" id="6PQE">
    <property type="method" value="NMR"/>
    <property type="chains" value="A=235-245"/>
</dbReference>
<dbReference type="PDB" id="6PQM">
    <property type="method" value="NMR"/>
    <property type="chains" value="A=415-430"/>
</dbReference>
<dbReference type="PDB" id="6PRI">
    <property type="method" value="NMR"/>
    <property type="chains" value="A=437-447"/>
</dbReference>
<dbReference type="PDB" id="6PRJ">
    <property type="method" value="NMR"/>
    <property type="chains" value="A=457-467"/>
</dbReference>
<dbReference type="PDB" id="6PRQ">
    <property type="method" value="NMR"/>
    <property type="chains" value="A=179-187"/>
</dbReference>
<dbReference type="PDB" id="6PSI">
    <property type="method" value="NMR"/>
    <property type="chains" value="B=1-471"/>
</dbReference>
<dbReference type="PDB" id="7JMM">
    <property type="method" value="X-ray"/>
    <property type="resolution" value="2.56 A"/>
    <property type="chains" value="M=63-72"/>
</dbReference>
<dbReference type="PDB" id="7JN8">
    <property type="method" value="X-ray"/>
    <property type="resolution" value="3.09 A"/>
    <property type="chains" value="B=381-390"/>
</dbReference>
<dbReference type="PDB" id="7JN9">
    <property type="method" value="X-ray"/>
    <property type="resolution" value="2.40 A"/>
    <property type="chains" value="B=432-446"/>
</dbReference>
<dbReference type="PDB" id="7JNE">
    <property type="method" value="X-ray"/>
    <property type="resolution" value="2.54 A"/>
    <property type="chains" value="B=435-444"/>
</dbReference>
<dbReference type="PDB" id="7N6J">
    <property type="method" value="X-ray"/>
    <property type="resolution" value="2.00 A"/>
    <property type="chains" value="B=1-19"/>
</dbReference>
<dbReference type="PDB" id="7N6K">
    <property type="method" value="X-ray"/>
    <property type="resolution" value="2.55 A"/>
    <property type="chains" value="B=6-15"/>
</dbReference>
<dbReference type="PDB" id="7N6L">
    <property type="method" value="X-ray"/>
    <property type="resolution" value="2.40 A"/>
    <property type="chains" value="B=270-284"/>
</dbReference>
<dbReference type="PDB" id="7N6M">
    <property type="method" value="X-ray"/>
    <property type="resolution" value="1.82 A"/>
    <property type="chains" value="B=273-282"/>
</dbReference>
<dbReference type="PDBsum" id="1AJA"/>
<dbReference type="PDBsum" id="1AJB"/>
<dbReference type="PDBsum" id="1AJC"/>
<dbReference type="PDBsum" id="1AJD"/>
<dbReference type="PDBsum" id="1ALH"/>
<dbReference type="PDBsum" id="1ALI"/>
<dbReference type="PDBsum" id="1ALJ"/>
<dbReference type="PDBsum" id="1ALK"/>
<dbReference type="PDBsum" id="1ANI"/>
<dbReference type="PDBsum" id="1ANJ"/>
<dbReference type="PDBsum" id="1B8J"/>
<dbReference type="PDBsum" id="1ED8"/>
<dbReference type="PDBsum" id="1ED9"/>
<dbReference type="PDBsum" id="1ELX"/>
<dbReference type="PDBsum" id="1ELY"/>
<dbReference type="PDBsum" id="1ELZ"/>
<dbReference type="PDBsum" id="1EW8"/>
<dbReference type="PDBsum" id="1EW9"/>
<dbReference type="PDBsum" id="1HJK"/>
<dbReference type="PDBsum" id="1HQA"/>
<dbReference type="PDBsum" id="1KH4"/>
<dbReference type="PDBsum" id="1KH5"/>
<dbReference type="PDBsum" id="1KH7"/>
<dbReference type="PDBsum" id="1KH9"/>
<dbReference type="PDBsum" id="1KHJ"/>
<dbReference type="PDBsum" id="1KHK"/>
<dbReference type="PDBsum" id="1KHL"/>
<dbReference type="PDBsum" id="1KHN"/>
<dbReference type="PDBsum" id="1URA"/>
<dbReference type="PDBsum" id="1URB"/>
<dbReference type="PDBsum" id="1Y6V"/>
<dbReference type="PDBsum" id="1Y7A"/>
<dbReference type="PDBsum" id="2ANH"/>
<dbReference type="PDBsum" id="2G9Y"/>
<dbReference type="PDBsum" id="2GA3"/>
<dbReference type="PDBsum" id="2MLX"/>
<dbReference type="PDBsum" id="2MLY"/>
<dbReference type="PDBsum" id="2MLZ"/>
<dbReference type="PDBsum" id="3BDF"/>
<dbReference type="PDBsum" id="3BDG"/>
<dbReference type="PDBsum" id="3BDH"/>
<dbReference type="PDBsum" id="3CMR"/>
<dbReference type="PDBsum" id="3DPC"/>
<dbReference type="PDBsum" id="3DYC"/>
<dbReference type="PDBsum" id="3TG0"/>
<dbReference type="PDBsum" id="4KM4"/>
<dbReference type="PDBsum" id="4YR1"/>
<dbReference type="PDBsum" id="5C66"/>
<dbReference type="PDBsum" id="5GAD"/>
<dbReference type="PDBsum" id="5GAF"/>
<dbReference type="PDBsum" id="5GAG"/>
<dbReference type="PDBsum" id="5GAH"/>
<dbReference type="PDBsum" id="5JTL"/>
<dbReference type="PDBsum" id="5JTM"/>
<dbReference type="PDBsum" id="5JTN"/>
<dbReference type="PDBsum" id="5JTO"/>
<dbReference type="PDBsum" id="5JTP"/>
<dbReference type="PDBsum" id="5TPQ"/>
<dbReference type="PDBsum" id="6PPT"/>
<dbReference type="PDBsum" id="6PQ2"/>
<dbReference type="PDBsum" id="6PQE"/>
<dbReference type="PDBsum" id="6PQM"/>
<dbReference type="PDBsum" id="6PRI"/>
<dbReference type="PDBsum" id="6PRJ"/>
<dbReference type="PDBsum" id="6PRQ"/>
<dbReference type="PDBsum" id="6PSI"/>
<dbReference type="PDBsum" id="7JMM"/>
<dbReference type="PDBsum" id="7JN8"/>
<dbReference type="PDBsum" id="7JN9"/>
<dbReference type="PDBsum" id="7JNE"/>
<dbReference type="PDBsum" id="7N6J"/>
<dbReference type="PDBsum" id="7N6K"/>
<dbReference type="PDBsum" id="7N6L"/>
<dbReference type="PDBsum" id="7N6M"/>
<dbReference type="BMRB" id="P00634"/>
<dbReference type="PCDDB" id="P00634"/>
<dbReference type="SMR" id="P00634"/>
<dbReference type="BioGRID" id="4259827">
    <property type="interactions" value="53"/>
</dbReference>
<dbReference type="BioGRID" id="849430">
    <property type="interactions" value="1"/>
</dbReference>
<dbReference type="DIP" id="DIP-10496N"/>
<dbReference type="FunCoup" id="P00634">
    <property type="interactions" value="541"/>
</dbReference>
<dbReference type="IntAct" id="P00634">
    <property type="interactions" value="7"/>
</dbReference>
<dbReference type="STRING" id="511145.b0383"/>
<dbReference type="ChEMBL" id="CHEMBL4217"/>
<dbReference type="DrugBank" id="DB04522">
    <property type="generic name" value="Dexfosfoserine"/>
</dbReference>
<dbReference type="DrugBank" id="DB03498">
    <property type="generic name" value="Mercaptomethyl Phosphonate"/>
</dbReference>
<dbReference type="DrugBank" id="DB02823">
    <property type="generic name" value="Phosphonoacetic Acid"/>
</dbReference>
<dbReference type="DrugBank" id="DB04031">
    <property type="generic name" value="Serine vanadate"/>
</dbReference>
<dbReference type="PaxDb" id="511145-b0383"/>
<dbReference type="EnsemblBacteria" id="AAC73486">
    <property type="protein sequence ID" value="AAC73486"/>
    <property type="gene ID" value="b0383"/>
</dbReference>
<dbReference type="GeneID" id="945041"/>
<dbReference type="KEGG" id="ecj:JW0374"/>
<dbReference type="KEGG" id="eco:b0383"/>
<dbReference type="PATRIC" id="fig|1411691.4.peg.1895"/>
<dbReference type="EchoBASE" id="EB0720"/>
<dbReference type="eggNOG" id="COG1785">
    <property type="taxonomic scope" value="Bacteria"/>
</dbReference>
<dbReference type="HOGENOM" id="CLU_008539_0_1_6"/>
<dbReference type="InParanoid" id="P00634"/>
<dbReference type="OMA" id="YQLMHNV"/>
<dbReference type="OrthoDB" id="9794455at2"/>
<dbReference type="PhylomeDB" id="P00634"/>
<dbReference type="BioCyc" id="EcoCyc:ALKAPHOSPHA-MONOMER"/>
<dbReference type="BioCyc" id="MetaCyc:ALKAPHOSPHA-MONOMER"/>
<dbReference type="BRENDA" id="3.1.3.1">
    <property type="organism ID" value="2026"/>
</dbReference>
<dbReference type="SABIO-RK" id="P00634"/>
<dbReference type="EvolutionaryTrace" id="P00634"/>
<dbReference type="PRO" id="PR:P00634"/>
<dbReference type="Proteomes" id="UP000000625">
    <property type="component" value="Chromosome"/>
</dbReference>
<dbReference type="GO" id="GO:0030288">
    <property type="term" value="C:outer membrane-bounded periplasmic space"/>
    <property type="evidence" value="ECO:0000314"/>
    <property type="project" value="EcoCyc"/>
</dbReference>
<dbReference type="GO" id="GO:0042597">
    <property type="term" value="C:periplasmic space"/>
    <property type="evidence" value="ECO:0000314"/>
    <property type="project" value="EcoCyc"/>
</dbReference>
<dbReference type="GO" id="GO:0004035">
    <property type="term" value="F:alkaline phosphatase activity"/>
    <property type="evidence" value="ECO:0000314"/>
    <property type="project" value="CAFA"/>
</dbReference>
<dbReference type="GO" id="GO:0033748">
    <property type="term" value="F:hydrogenase (acceptor) activity"/>
    <property type="evidence" value="ECO:0000314"/>
    <property type="project" value="EcoCyc"/>
</dbReference>
<dbReference type="GO" id="GO:0000287">
    <property type="term" value="F:magnesium ion binding"/>
    <property type="evidence" value="ECO:0000314"/>
    <property type="project" value="EcoCyc"/>
</dbReference>
<dbReference type="GO" id="GO:0030613">
    <property type="term" value="F:oxidoreductase activity, acting on phosphorus or arsenic in donors"/>
    <property type="evidence" value="ECO:0000314"/>
    <property type="project" value="EcoliWiki"/>
</dbReference>
<dbReference type="GO" id="GO:0004721">
    <property type="term" value="F:phosphoprotein phosphatase activity"/>
    <property type="evidence" value="ECO:0000314"/>
    <property type="project" value="CAFA"/>
</dbReference>
<dbReference type="GO" id="GO:0008270">
    <property type="term" value="F:zinc ion binding"/>
    <property type="evidence" value="ECO:0000314"/>
    <property type="project" value="EcoCyc"/>
</dbReference>
<dbReference type="GO" id="GO:0006470">
    <property type="term" value="P:protein dephosphorylation"/>
    <property type="evidence" value="ECO:0000314"/>
    <property type="project" value="CAFA"/>
</dbReference>
<dbReference type="CDD" id="cd16012">
    <property type="entry name" value="ALP"/>
    <property type="match status" value="1"/>
</dbReference>
<dbReference type="FunFam" id="3.40.720.10:FF:000040">
    <property type="entry name" value="Alkaline phosphatase"/>
    <property type="match status" value="1"/>
</dbReference>
<dbReference type="Gene3D" id="3.40.720.10">
    <property type="entry name" value="Alkaline Phosphatase, subunit A"/>
    <property type="match status" value="1"/>
</dbReference>
<dbReference type="InterPro" id="IPR001952">
    <property type="entry name" value="Alkaline_phosphatase"/>
</dbReference>
<dbReference type="InterPro" id="IPR018299">
    <property type="entry name" value="Alkaline_phosphatase_AS"/>
</dbReference>
<dbReference type="InterPro" id="IPR017850">
    <property type="entry name" value="Alkaline_phosphatase_core_sf"/>
</dbReference>
<dbReference type="NCBIfam" id="NF007810">
    <property type="entry name" value="PRK10518.1"/>
    <property type="match status" value="1"/>
</dbReference>
<dbReference type="PANTHER" id="PTHR11596">
    <property type="entry name" value="ALKALINE PHOSPHATASE"/>
    <property type="match status" value="1"/>
</dbReference>
<dbReference type="PANTHER" id="PTHR11596:SF5">
    <property type="entry name" value="ALKALINE PHOSPHATASE"/>
    <property type="match status" value="1"/>
</dbReference>
<dbReference type="Pfam" id="PF00245">
    <property type="entry name" value="Alk_phosphatase"/>
    <property type="match status" value="1"/>
</dbReference>
<dbReference type="PRINTS" id="PR00113">
    <property type="entry name" value="ALKPHPHTASE"/>
</dbReference>
<dbReference type="SMART" id="SM00098">
    <property type="entry name" value="alkPPc"/>
    <property type="match status" value="1"/>
</dbReference>
<dbReference type="SUPFAM" id="SSF53649">
    <property type="entry name" value="Alkaline phosphatase-like"/>
    <property type="match status" value="1"/>
</dbReference>
<dbReference type="PROSITE" id="PS00123">
    <property type="entry name" value="ALKALINE_PHOSPHATASE"/>
    <property type="match status" value="1"/>
</dbReference>
<keyword id="KW-0002">3D-structure</keyword>
<keyword id="KW-0903">Direct protein sequencing</keyword>
<keyword id="KW-1015">Disulfide bond</keyword>
<keyword id="KW-0378">Hydrolase</keyword>
<keyword id="KW-0460">Magnesium</keyword>
<keyword id="KW-0479">Metal-binding</keyword>
<keyword id="KW-0574">Periplasm</keyword>
<keyword id="KW-0597">Phosphoprotein</keyword>
<keyword id="KW-1185">Reference proteome</keyword>
<keyword id="KW-0732">Signal</keyword>
<keyword id="KW-0862">Zinc</keyword>
<comment type="catalytic activity">
    <reaction evidence="1">
        <text>a phosphate monoester + H2O = an alcohol + phosphate</text>
        <dbReference type="Rhea" id="RHEA:15017"/>
        <dbReference type="ChEBI" id="CHEBI:15377"/>
        <dbReference type="ChEBI" id="CHEBI:30879"/>
        <dbReference type="ChEBI" id="CHEBI:43474"/>
        <dbReference type="ChEBI" id="CHEBI:67140"/>
        <dbReference type="EC" id="3.1.3.1"/>
    </reaction>
</comment>
<comment type="cofactor">
    <cofactor>
        <name>Mg(2+)</name>
        <dbReference type="ChEBI" id="CHEBI:18420"/>
    </cofactor>
    <text>Binds 1 Mg(2+) ion.</text>
</comment>
<comment type="cofactor">
    <cofactor>
        <name>Zn(2+)</name>
        <dbReference type="ChEBI" id="CHEBI:29105"/>
    </cofactor>
    <text>Binds 2 Zn(2+) ions.</text>
</comment>
<comment type="subunit">
    <text>Isozymes 1 and 3 are a dimer of identical chains, isozyme 2 is a dimer of heterogeneous chains, one of each of the subunits from isozymes 1 and 3.</text>
</comment>
<comment type="interaction">
    <interactant intactId="EBI-552958">
        <id>P00634</id>
    </interactant>
    <interactant intactId="EBI-549711">
        <id>P0AEG4</id>
        <label>dsbA</label>
    </interactant>
    <organismsDiffer>false</organismsDiffer>
    <experiments>2</experiments>
</comment>
<comment type="interaction">
    <interactant intactId="EBI-552958">
        <id>P00634</id>
    </interactant>
    <interactant intactId="EBI-543213">
        <id>P10408</id>
        <label>secA</label>
    </interactant>
    <organismsDiffer>false</organismsDiffer>
    <experiments>3</experiments>
</comment>
<comment type="interaction">
    <interactant intactId="EBI-552958">
        <id>P00634</id>
    </interactant>
    <interactant intactId="EBI-5323863">
        <id>Q5S007</id>
        <label>LRRK2</label>
    </interactant>
    <organismsDiffer>true</organismsDiffer>
    <experiments>2</experiments>
</comment>
<comment type="subcellular location">
    <subcellularLocation>
        <location>Periplasm</location>
    </subcellularLocation>
</comment>
<comment type="similarity">
    <text evidence="2">Belongs to the alkaline phosphatase family.</text>
</comment>
<name>PPB_ECOLI</name>
<protein>
    <recommendedName>
        <fullName>Alkaline phosphatase</fullName>
        <shortName>APase</shortName>
        <ecNumber>3.1.3.1</ecNumber>
    </recommendedName>
</protein>
<reference key="1">
    <citation type="journal article" date="1986" name="Nucleic Acids Res.">
        <title>Sequence of the gene for alkaline phosphatase from Escherichia coli JM83.</title>
        <authorList>
            <person name="Shuttleworth H."/>
            <person name="Taylor J."/>
            <person name="Minton N."/>
        </authorList>
    </citation>
    <scope>NUCLEOTIDE SEQUENCE [GENOMIC DNA]</scope>
    <source>
        <strain>K12 / ATCC 35607 / JM83</strain>
    </source>
</reference>
<reference key="2">
    <citation type="journal article" date="1986" name="Gene">
        <title>Nucleotide sequence of the alkaline phosphatase gene of Escherichia coli.</title>
        <authorList>
            <person name="Chang C.N."/>
            <person name="Kuang W.-J."/>
            <person name="Chen E.Y."/>
        </authorList>
    </citation>
    <scope>NUCLEOTIDE SEQUENCE [GENOMIC DNA]</scope>
</reference>
<reference key="3">
    <citation type="journal article" date="1988" name="Proc. Natl. Acad. Sci. U.S.A.">
        <title>Genetic exchange among natural isolates of bacteria: recombination within the phoA gene of Escherichia coli.</title>
        <authorList>
            <person name="Dubose R.F."/>
            <person name="Dykhuizen D.E."/>
            <person name="Hartl D.L."/>
        </authorList>
    </citation>
    <scope>NUCLEOTIDE SEQUENCE [GENOMIC DNA]</scope>
</reference>
<reference key="4">
    <citation type="submission" date="1997-01" db="EMBL/GenBank/DDBJ databases">
        <title>Sequence of minutes 4-25 of Escherichia coli.</title>
        <authorList>
            <person name="Chung E."/>
            <person name="Allen E."/>
            <person name="Araujo R."/>
            <person name="Aparicio A.M."/>
            <person name="Davis K."/>
            <person name="Duncan M."/>
            <person name="Federspiel N."/>
            <person name="Hyman R."/>
            <person name="Kalman S."/>
            <person name="Komp C."/>
            <person name="Kurdi O."/>
            <person name="Lew H."/>
            <person name="Lin D."/>
            <person name="Namath A."/>
            <person name="Oefner P."/>
            <person name="Roberts D."/>
            <person name="Schramm S."/>
            <person name="Davis R.W."/>
        </authorList>
    </citation>
    <scope>NUCLEOTIDE SEQUENCE [LARGE SCALE GENOMIC DNA]</scope>
    <source>
        <strain>K12 / MG1655 / ATCC 47076</strain>
    </source>
</reference>
<reference key="5">
    <citation type="journal article" date="1997" name="Science">
        <title>The complete genome sequence of Escherichia coli K-12.</title>
        <authorList>
            <person name="Blattner F.R."/>
            <person name="Plunkett G. III"/>
            <person name="Bloch C.A."/>
            <person name="Perna N.T."/>
            <person name="Burland V."/>
            <person name="Riley M."/>
            <person name="Collado-Vides J."/>
            <person name="Glasner J.D."/>
            <person name="Rode C.K."/>
            <person name="Mayhew G.F."/>
            <person name="Gregor J."/>
            <person name="Davis N.W."/>
            <person name="Kirkpatrick H.A."/>
            <person name="Goeden M.A."/>
            <person name="Rose D.J."/>
            <person name="Mau B."/>
            <person name="Shao Y."/>
        </authorList>
    </citation>
    <scope>NUCLEOTIDE SEQUENCE [LARGE SCALE GENOMIC DNA]</scope>
    <source>
        <strain>K12 / MG1655 / ATCC 47076</strain>
    </source>
</reference>
<reference key="6">
    <citation type="journal article" date="2006" name="Mol. Syst. Biol.">
        <title>Highly accurate genome sequences of Escherichia coli K-12 strains MG1655 and W3110.</title>
        <authorList>
            <person name="Hayashi K."/>
            <person name="Morooka N."/>
            <person name="Yamamoto Y."/>
            <person name="Fujita K."/>
            <person name="Isono K."/>
            <person name="Choi S."/>
            <person name="Ohtsubo E."/>
            <person name="Baba T."/>
            <person name="Wanner B.L."/>
            <person name="Mori H."/>
            <person name="Horiuchi T."/>
        </authorList>
    </citation>
    <scope>NUCLEOTIDE SEQUENCE [LARGE SCALE GENOMIC DNA]</scope>
    <source>
        <strain>K12 / W3110 / ATCC 27325 / DSM 5911</strain>
    </source>
</reference>
<reference key="7">
    <citation type="journal article" date="1990" name="J. Bacteriol.">
        <title>A phoA structural gene mutation that conditionally affects formation of the enzyme bacterial alkaline phosphatase.</title>
        <authorList>
            <person name="Agrawal D.K."/>
            <person name="Wanner B.L."/>
        </authorList>
    </citation>
    <scope>NUCLEOTIDE SEQUENCE [GENOMIC DNA] OF 1-106</scope>
</reference>
<reference key="8">
    <citation type="journal article" date="1981" name="Nucleic Acids Res.">
        <title>The nucleotide sequence of the promoter and the amino-terminal region of alkaline phosphatase structural gene (phoA) of Escherichia coli.</title>
        <authorList>
            <person name="Kikuchi Y."/>
            <person name="Yoda K."/>
            <person name="Yamasaki M."/>
            <person name="Tamura G."/>
        </authorList>
    </citation>
    <scope>NUCLEOTIDE SEQUENCE [GENOMIC DNA] OF 1-80</scope>
</reference>
<reference key="9">
    <citation type="journal article" date="1981" name="Proc. Natl. Acad. Sci. U.S.A.">
        <title>Amino acid sequence of Escherichia coli alkaline phosphatase.</title>
        <authorList>
            <person name="Bradshaw R.A."/>
            <person name="Cancedda F."/>
            <person name="Ericsson L.H."/>
            <person name="Neumann P.A."/>
            <person name="Piccoli S.P."/>
            <person name="Schlesinger M.J."/>
            <person name="Shriefer K."/>
            <person name="Walsh K.A."/>
        </authorList>
    </citation>
    <scope>PROTEIN SEQUENCE OF 23-471 (ISOZYME 3)</scope>
</reference>
<reference key="10">
    <citation type="journal article" date="1982" name="J. Bacteriol.">
        <title>Signal sequence of alkaline phosphatase of Escherichia coli.</title>
        <authorList>
            <person name="Inouye H."/>
            <person name="Barnes W."/>
            <person name="Beckwith J."/>
        </authorList>
    </citation>
    <scope>NUCLEOTIDE SEQUENCE [GENOMIC DNA] OF 162-193 AND 385-399</scope>
</reference>
<reference key="11">
    <citation type="journal article" date="1989" name="J. Biol. Chem.">
        <title>Signal peptide subsegments are not always functionally interchangeable. M13 procoat hydrophobic core fails to transport alkaline phosphatase in Escherichia coli.</title>
        <authorList>
            <person name="Laforet G.A."/>
            <person name="Kaiser E.T."/>
            <person name="Kendall D.A."/>
        </authorList>
    </citation>
    <scope>NUCLEOTIDE SEQUENCE [GENOMIC DNA] OF 1-23</scope>
</reference>
<reference key="12">
    <citation type="journal article" date="1985" name="Gene">
        <title>Periplasmic production of correctly processed human growth hormone in Escherichia coli: natural and bacterial signal sequences are interchangeable.</title>
        <authorList>
            <person name="Gray G.L."/>
            <person name="Baldridge J.S."/>
            <person name="McKeown K.S."/>
            <person name="Heyneker H.L."/>
            <person name="Chang C.N."/>
        </authorList>
    </citation>
    <scope>NUCLEOTIDE SEQUENCE [GENOMIC DNA] OF 1-21</scope>
</reference>
<reference key="13">
    <citation type="journal article" date="1986" name="J. Bacteriol.">
        <title>Effects of signal sequence mutations on the kinetics of alkaline phosphatase export to the periplasm in Escherichia coli.</title>
        <authorList>
            <person name="Michaelis S."/>
            <person name="Hunt J.F."/>
            <person name="Beckwith J."/>
        </authorList>
    </citation>
    <scope>NUCLEOTIDE SEQUENCE [GENOMIC DNA] OF 1-21</scope>
</reference>
<reference key="14">
    <citation type="journal article" date="1997" name="Electrophoresis">
        <title>Escherichia coli proteome analysis using the gene-protein database.</title>
        <authorList>
            <person name="VanBogelen R.A."/>
            <person name="Abshire K.Z."/>
            <person name="Moldover B."/>
            <person name="Olson E.R."/>
            <person name="Neidhardt F.C."/>
        </authorList>
    </citation>
    <scope>IDENTIFICATION BY 2D-GEL</scope>
</reference>
<reference key="15">
    <citation type="journal article" date="1985" name="J. Mol. Biol.">
        <title>Refined structure of alkaline phosphatase from Escherichia coli at 2.8-A resolution.</title>
        <authorList>
            <person name="Sowadski J.M."/>
            <person name="Handschumacher M.D."/>
            <person name="Krishna Murthy H.M."/>
            <person name="Foster B.A."/>
            <person name="Wyckoff H.W."/>
        </authorList>
    </citation>
    <scope>X-RAY CRYSTALLOGRAPHY (2.8 ANGSTROMS)</scope>
</reference>
<reference key="16">
    <citation type="journal article" date="1991" name="J. Mol. Biol.">
        <title>Reaction mechanism of alkaline phosphatase based on crystal structures. Two-metal ion catalysis.</title>
        <authorList>
            <person name="Kim E.E."/>
            <person name="Wyckoff H.W."/>
        </authorList>
    </citation>
    <scope>X-RAY CRYSTALLOGRAPHY (2.0 ANGSTROMS)</scope>
</reference>
<reference key="17">
    <citation type="journal article" date="1995" name="Biochemistry">
        <title>Crystallographic analysis of reversible metal binding observed in a mutant (Asp153--&gt;Gly) of Escherichia coli alkaline phosphatase.</title>
        <authorList>
            <person name="Dealwis C.G."/>
            <person name="Brennan C."/>
            <person name="Christianson K."/>
            <person name="Mandecki W."/>
            <person name="Abad-Zapatero C."/>
        </authorList>
    </citation>
    <scope>X-RAY CRYSTALLOGRAPHY (2.5 ANGSTROMS) OF MUTANT GLY-175</scope>
</reference>
<reference key="18">
    <citation type="journal article" date="1996" name="Biochemistry">
        <title>Kinetic and X-ray structural studies of a mutant Escherichia coli alkaline phosphatase (His-412--&gt;Gln) at one of the zinc binding sites.</title>
        <authorList>
            <person name="Ma L."/>
            <person name="Kantrowitz E.R."/>
        </authorList>
    </citation>
    <scope>X-RAY CRYSTALLOGRAPHY (2.25 ANGSTROMS) OF MUTANT GLN-434</scope>
</reference>
<reference key="19">
    <citation type="journal article" date="1997" name="Nat. Struct. Biol.">
        <title>Trapping and visualization of a covalent enzyme-phosphate intermediate.</title>
        <authorList>
            <person name="Murphy J.E."/>
            <person name="Stec B."/>
            <person name="Ma L."/>
            <person name="Kantrowitz E.R."/>
        </authorList>
    </citation>
    <scope>X-RAY CRYSTALLOGRAPHY (2.3 ANGSTROMS)</scope>
</reference>
<reference key="20">
    <citation type="journal article" date="1998" name="J. Mol. Biol.">
        <title>Kinetic and X-ray structural studies of three mutant E. coli alkaline phosphatases: insights into the catalytic mechanism without the nucleophile Ser102.</title>
        <authorList>
            <person name="Stec B."/>
            <person name="Hehir M.J."/>
            <person name="Brennan C."/>
            <person name="Nolte M."/>
            <person name="Kantrowitz E.R."/>
        </authorList>
    </citation>
    <scope>X-RAY CRYSTALLOGRAPHY (2.6 ANGSTROMS)</scope>
</reference>
<reference key="21">
    <citation type="journal article" date="1999" name="J. Biol. Chem.">
        <title>A model of the transition state in the alkaline phosphatase reaction.</title>
        <authorList>
            <person name="Holtz K.M."/>
            <person name="Stec B."/>
            <person name="Kantrowitz E.R."/>
        </authorList>
    </citation>
    <scope>X-RAY CRYSTALLOGRAPHY (1.9 ANGSTROMS)</scope>
</reference>
<reference key="22">
    <citation type="journal article" date="2014" name="Science">
        <title>Structural basis for protein antiaggregation activity of the trigger factor chaperone.</title>
        <authorList>
            <person name="Saio T."/>
            <person name="Guan X."/>
            <person name="Rossi P."/>
            <person name="Economou A."/>
            <person name="Kalodimos C.G."/>
        </authorList>
    </citation>
    <scope>STRUCTURE BY NMR OF 1-50; 220-310 AND 360-471 IN COMPLEX WITH TRIGGER FACTOR CHAPERONE</scope>
</reference>
<proteinExistence type="evidence at protein level"/>
<sequence>MKQSTIALALLPLLFTPVTKARTPEMPVLENRAAQGDITAPGGARRLTGDQTAALRDSLSDKPAKNIILLIGDGMGDSEITAARNYAEGAGGFFKGIDALPLTGQYTHYALNKKTGKPDYVTDSAASATAWSTGVKTYNGALGVDIHEKDHPTILEMAKAAGLATGNVSTAELQDATPAALVAHVTSRKCYGPSATSEKCPGNALEKGGKGSITEQLLNARADVTLGGGAKTFAETATAGEWQGKTLREQAQARGYQLVSDAASLNSVTEANQQKPLLGLFADGNMPVRWLGPKATYHGNIDKPAVTCTPNPQRNDSVPTLAQMTDKAIELLSKNEKGFFLQVEGASIDKQDHAANPCGQIGETVDLDEAVQRALEFAKKEGNTLVIVTADHAHASQIVAPDTKAPGLTQALNTKDGAVMVMSYGNSEEDSQEHTGSQLRIAAYGPHAANVVGLTDQTDLFYTMKAALGLK</sequence>
<evidence type="ECO:0000255" key="1">
    <source>
        <dbReference type="PROSITE-ProRule" id="PRU10042"/>
    </source>
</evidence>
<evidence type="ECO:0000305" key="2"/>
<evidence type="ECO:0007829" key="3">
    <source>
        <dbReference type="PDB" id="1ALK"/>
    </source>
</evidence>
<evidence type="ECO:0007829" key="4">
    <source>
        <dbReference type="PDB" id="1ED8"/>
    </source>
</evidence>
<evidence type="ECO:0007829" key="5">
    <source>
        <dbReference type="PDB" id="1ED9"/>
    </source>
</evidence>
<evidence type="ECO:0007829" key="6">
    <source>
        <dbReference type="PDB" id="1KH5"/>
    </source>
</evidence>
<evidence type="ECO:0007829" key="7">
    <source>
        <dbReference type="PDB" id="2MLZ"/>
    </source>
</evidence>
<evidence type="ECO:0007829" key="8">
    <source>
        <dbReference type="PDB" id="3DPC"/>
    </source>
</evidence>
<evidence type="ECO:0007829" key="9">
    <source>
        <dbReference type="PDB" id="3TG0"/>
    </source>
</evidence>
<evidence type="ECO:0007829" key="10">
    <source>
        <dbReference type="PDB" id="5JTL"/>
    </source>
</evidence>
<evidence type="ECO:0007829" key="11">
    <source>
        <dbReference type="PDB" id="5JTN"/>
    </source>
</evidence>
<evidence type="ECO:0007829" key="12">
    <source>
        <dbReference type="PDB" id="6PSI"/>
    </source>
</evidence>
<evidence type="ECO:0007829" key="13">
    <source>
        <dbReference type="PDB" id="7N6J"/>
    </source>
</evidence>
<organism>
    <name type="scientific">Escherichia coli (strain K12)</name>
    <dbReference type="NCBI Taxonomy" id="83333"/>
    <lineage>
        <taxon>Bacteria</taxon>
        <taxon>Pseudomonadati</taxon>
        <taxon>Pseudomonadota</taxon>
        <taxon>Gammaproteobacteria</taxon>
        <taxon>Enterobacterales</taxon>
        <taxon>Enterobacteriaceae</taxon>
        <taxon>Escherichia</taxon>
    </lineage>
</organism>
<gene>
    <name type="primary">phoA</name>
    <name type="ordered locus">b0383</name>
    <name type="ordered locus">JW0374</name>
</gene>
<accession>P00634</accession>
<accession>P77801</accession>
<accession>P78051</accession>
<accession>Q2MC42</accession>
<accession>Q47041</accession>
<feature type="signal peptide">
    <location>
        <begin position="1"/>
        <end position="21"/>
    </location>
</feature>
<feature type="chain" id="PRO_0000024012" description="Alkaline phosphatase">
    <location>
        <begin position="22"/>
        <end position="471"/>
    </location>
</feature>
<feature type="active site" description="Phosphoserine intermediate">
    <location>
        <position position="124"/>
    </location>
</feature>
<feature type="binding site">
    <location>
        <position position="73"/>
    </location>
    <ligand>
        <name>Mg(2+)</name>
        <dbReference type="ChEBI" id="CHEBI:18420"/>
    </ligand>
</feature>
<feature type="binding site">
    <location>
        <position position="73"/>
    </location>
    <ligand>
        <name>Zn(2+)</name>
        <dbReference type="ChEBI" id="CHEBI:29105"/>
        <label>2</label>
    </ligand>
</feature>
<feature type="binding site">
    <location>
        <position position="175"/>
    </location>
    <ligand>
        <name>Mg(2+)</name>
        <dbReference type="ChEBI" id="CHEBI:18420"/>
    </ligand>
</feature>
<feature type="binding site">
    <location>
        <position position="177"/>
    </location>
    <ligand>
        <name>Mg(2+)</name>
        <dbReference type="ChEBI" id="CHEBI:18420"/>
    </ligand>
</feature>
<feature type="binding site">
    <location>
        <position position="344"/>
    </location>
    <ligand>
        <name>Mg(2+)</name>
        <dbReference type="ChEBI" id="CHEBI:18420"/>
    </ligand>
</feature>
<feature type="binding site">
    <location>
        <position position="349"/>
    </location>
    <ligand>
        <name>Zn(2+)</name>
        <dbReference type="ChEBI" id="CHEBI:29105"/>
        <label>1</label>
    </ligand>
</feature>
<feature type="binding site">
    <location>
        <position position="353"/>
    </location>
    <ligand>
        <name>Zn(2+)</name>
        <dbReference type="ChEBI" id="CHEBI:29105"/>
        <label>1</label>
    </ligand>
</feature>
<feature type="binding site">
    <location>
        <position position="391"/>
    </location>
    <ligand>
        <name>Zn(2+)</name>
        <dbReference type="ChEBI" id="CHEBI:29105"/>
        <label>2</label>
    </ligand>
</feature>
<feature type="binding site">
    <location>
        <position position="392"/>
    </location>
    <ligand>
        <name>Zn(2+)</name>
        <dbReference type="ChEBI" id="CHEBI:29105"/>
        <label>2</label>
    </ligand>
</feature>
<feature type="binding site">
    <location>
        <position position="434"/>
    </location>
    <ligand>
        <name>Zn(2+)</name>
        <dbReference type="ChEBI" id="CHEBI:29105"/>
        <label>1</label>
    </ligand>
</feature>
<feature type="disulfide bond">
    <location>
        <begin position="190"/>
        <end position="200"/>
    </location>
</feature>
<feature type="disulfide bond">
    <location>
        <begin position="308"/>
        <end position="358"/>
    </location>
</feature>
<feature type="sequence variant" description="In isozyme 3.">
    <location>
        <position position="22"/>
    </location>
</feature>
<feature type="sequence conflict" description="In Ref. 12; AAA23431." evidence="2" ref="12">
    <original>L</original>
    <variation>V</variation>
    <location>
        <position position="10"/>
    </location>
</feature>
<feature type="sequence conflict" description="In Ref. 8; AAA24359." evidence="2" ref="8">
    <original>SEI</original>
    <variation>WGS</variation>
    <location>
        <begin position="78"/>
        <end position="80"/>
    </location>
</feature>
<feature type="sequence conflict" description="In Ref. 9; AA sequence." evidence="2" ref="9">
    <original>E</original>
    <variation>Q</variation>
    <location>
        <position position="198"/>
    </location>
</feature>
<feature type="strand" evidence="13">
    <location>
        <begin position="6"/>
        <end position="8"/>
    </location>
</feature>
<feature type="turn" evidence="10">
    <location>
        <begin position="16"/>
        <end position="18"/>
    </location>
</feature>
<feature type="turn" evidence="9">
    <location>
        <begin position="41"/>
        <end position="44"/>
    </location>
</feature>
<feature type="helix" evidence="9">
    <location>
        <begin position="52"/>
        <end position="58"/>
    </location>
</feature>
<feature type="strand" evidence="12">
    <location>
        <begin position="62"/>
        <end position="64"/>
    </location>
</feature>
<feature type="strand" evidence="9">
    <location>
        <begin position="65"/>
        <end position="72"/>
    </location>
</feature>
<feature type="strand" evidence="12">
    <location>
        <begin position="74"/>
        <end position="76"/>
    </location>
</feature>
<feature type="helix" evidence="9">
    <location>
        <begin position="77"/>
        <end position="87"/>
    </location>
</feature>
<feature type="strand" evidence="11">
    <location>
        <begin position="93"/>
        <end position="96"/>
    </location>
</feature>
<feature type="helix" evidence="9">
    <location>
        <begin position="97"/>
        <end position="99"/>
    </location>
</feature>
<feature type="strand" evidence="9">
    <location>
        <begin position="101"/>
        <end position="107"/>
    </location>
</feature>
<feature type="strand" evidence="12">
    <location>
        <begin position="108"/>
        <end position="111"/>
    </location>
</feature>
<feature type="turn" evidence="9">
    <location>
        <begin position="113"/>
        <end position="115"/>
    </location>
</feature>
<feature type="strand" evidence="9">
    <location>
        <begin position="118"/>
        <end position="121"/>
    </location>
</feature>
<feature type="helix" evidence="9">
    <location>
        <begin position="124"/>
        <end position="133"/>
    </location>
</feature>
<feature type="strand" evidence="9">
    <location>
        <begin position="142"/>
        <end position="144"/>
    </location>
</feature>
<feature type="helix" evidence="9">
    <location>
        <begin position="154"/>
        <end position="160"/>
    </location>
</feature>
<feature type="strand" evidence="9">
    <location>
        <begin position="164"/>
        <end position="172"/>
    </location>
</feature>
<feature type="helix" evidence="9">
    <location>
        <begin position="176"/>
        <end position="179"/>
    </location>
</feature>
<feature type="turn" evidence="9">
    <location>
        <begin position="180"/>
        <end position="182"/>
    </location>
</feature>
<feature type="strand" evidence="3">
    <location>
        <begin position="185"/>
        <end position="187"/>
    </location>
</feature>
<feature type="helix" evidence="9">
    <location>
        <begin position="193"/>
        <end position="199"/>
    </location>
</feature>
<feature type="helix" evidence="9">
    <location>
        <begin position="201"/>
        <end position="203"/>
    </location>
</feature>
<feature type="helix" evidence="9">
    <location>
        <begin position="205"/>
        <end position="207"/>
    </location>
</feature>
<feature type="helix" evidence="9">
    <location>
        <begin position="213"/>
        <end position="220"/>
    </location>
</feature>
<feature type="strand" evidence="9">
    <location>
        <begin position="223"/>
        <end position="228"/>
    </location>
</feature>
<feature type="helix" evidence="9">
    <location>
        <begin position="231"/>
        <end position="234"/>
    </location>
</feature>
<feature type="strand" evidence="9">
    <location>
        <begin position="235"/>
        <end position="240"/>
    </location>
</feature>
<feature type="turn" evidence="6">
    <location>
        <begin position="241"/>
        <end position="244"/>
    </location>
</feature>
<feature type="helix" evidence="9">
    <location>
        <begin position="247"/>
        <end position="253"/>
    </location>
</feature>
<feature type="strand" evidence="9">
    <location>
        <begin position="257"/>
        <end position="259"/>
    </location>
</feature>
<feature type="helix" evidence="9">
    <location>
        <begin position="262"/>
        <end position="267"/>
    </location>
</feature>
<feature type="strand" evidence="9">
    <location>
        <begin position="272"/>
        <end position="275"/>
    </location>
</feature>
<feature type="strand" evidence="9">
    <location>
        <begin position="277"/>
        <end position="280"/>
    </location>
</feature>
<feature type="strand" evidence="9">
    <location>
        <begin position="282"/>
        <end position="285"/>
    </location>
</feature>
<feature type="strand" evidence="9">
    <location>
        <begin position="289"/>
        <end position="291"/>
    </location>
</feature>
<feature type="helix" evidence="10">
    <location>
        <begin position="296"/>
        <end position="298"/>
    </location>
</feature>
<feature type="helix" evidence="9">
    <location>
        <begin position="299"/>
        <end position="302"/>
    </location>
</feature>
<feature type="strand" evidence="12">
    <location>
        <begin position="308"/>
        <end position="310"/>
    </location>
</feature>
<feature type="helix" evidence="5">
    <location>
        <begin position="312"/>
        <end position="314"/>
    </location>
</feature>
<feature type="strand" evidence="4">
    <location>
        <begin position="316"/>
        <end position="318"/>
    </location>
</feature>
<feature type="helix" evidence="9">
    <location>
        <begin position="321"/>
        <end position="332"/>
    </location>
</feature>
<feature type="strand" evidence="12">
    <location>
        <begin position="336"/>
        <end position="338"/>
    </location>
</feature>
<feature type="strand" evidence="9">
    <location>
        <begin position="339"/>
        <end position="345"/>
    </location>
</feature>
<feature type="helix" evidence="9">
    <location>
        <begin position="347"/>
        <end position="353"/>
    </location>
</feature>
<feature type="helix" evidence="9">
    <location>
        <begin position="357"/>
        <end position="381"/>
    </location>
</feature>
<feature type="strand" evidence="9">
    <location>
        <begin position="382"/>
        <end position="389"/>
    </location>
</feature>
<feature type="strand" evidence="9">
    <location>
        <begin position="391"/>
        <end position="393"/>
    </location>
</feature>
<feature type="strand" evidence="9">
    <location>
        <begin position="397"/>
        <end position="399"/>
    </location>
</feature>
<feature type="strand" evidence="8">
    <location>
        <begin position="401"/>
        <end position="403"/>
    </location>
</feature>
<feature type="strand" evidence="9">
    <location>
        <begin position="406"/>
        <end position="413"/>
    </location>
</feature>
<feature type="strand" evidence="9">
    <location>
        <begin position="417"/>
        <end position="424"/>
    </location>
</feature>
<feature type="strand" evidence="9">
    <location>
        <begin position="428"/>
        <end position="431"/>
    </location>
</feature>
<feature type="strand" evidence="7">
    <location>
        <begin position="433"/>
        <end position="435"/>
    </location>
</feature>
<feature type="strand" evidence="9">
    <location>
        <begin position="439"/>
        <end position="445"/>
    </location>
</feature>
<feature type="helix" evidence="9">
    <location>
        <begin position="448"/>
        <end position="451"/>
    </location>
</feature>
<feature type="strand" evidence="9">
    <location>
        <begin position="452"/>
        <end position="456"/>
    </location>
</feature>
<feature type="helix" evidence="9">
    <location>
        <begin position="457"/>
        <end position="467"/>
    </location>
</feature>